<reference key="1">
    <citation type="submission" date="2008-12" db="EMBL/GenBank/DDBJ databases">
        <title>Complete sequence of Chloroflexus aggregans DSM 9485.</title>
        <authorList>
            <consortium name="US DOE Joint Genome Institute"/>
            <person name="Lucas S."/>
            <person name="Copeland A."/>
            <person name="Lapidus A."/>
            <person name="Glavina del Rio T."/>
            <person name="Dalin E."/>
            <person name="Tice H."/>
            <person name="Pitluck S."/>
            <person name="Foster B."/>
            <person name="Larimer F."/>
            <person name="Land M."/>
            <person name="Hauser L."/>
            <person name="Kyrpides N."/>
            <person name="Mikhailova N."/>
            <person name="Bryant D.A."/>
            <person name="Richardson P."/>
        </authorList>
    </citation>
    <scope>NUCLEOTIDE SEQUENCE [LARGE SCALE GENOMIC DNA]</scope>
    <source>
        <strain>MD-66 / DSM 9485</strain>
    </source>
</reference>
<gene>
    <name evidence="1" type="primary">accD</name>
    <name type="ordered locus">Cagg_2380</name>
</gene>
<dbReference type="EC" id="2.1.3.15" evidence="1"/>
<dbReference type="EMBL" id="CP001337">
    <property type="protein sequence ID" value="ACL25254.1"/>
    <property type="molecule type" value="Genomic_DNA"/>
</dbReference>
<dbReference type="RefSeq" id="WP_015941112.1">
    <property type="nucleotide sequence ID" value="NC_011831.1"/>
</dbReference>
<dbReference type="SMR" id="B8G381"/>
<dbReference type="STRING" id="326427.Cagg_2380"/>
<dbReference type="KEGG" id="cag:Cagg_2380"/>
<dbReference type="eggNOG" id="COG0777">
    <property type="taxonomic scope" value="Bacteria"/>
</dbReference>
<dbReference type="HOGENOM" id="CLU_015486_1_1_0"/>
<dbReference type="OrthoDB" id="9772975at2"/>
<dbReference type="UniPathway" id="UPA00655">
    <property type="reaction ID" value="UER00711"/>
</dbReference>
<dbReference type="Proteomes" id="UP000002508">
    <property type="component" value="Chromosome"/>
</dbReference>
<dbReference type="GO" id="GO:0009317">
    <property type="term" value="C:acetyl-CoA carboxylase complex"/>
    <property type="evidence" value="ECO:0007669"/>
    <property type="project" value="InterPro"/>
</dbReference>
<dbReference type="GO" id="GO:0003989">
    <property type="term" value="F:acetyl-CoA carboxylase activity"/>
    <property type="evidence" value="ECO:0007669"/>
    <property type="project" value="InterPro"/>
</dbReference>
<dbReference type="GO" id="GO:0005524">
    <property type="term" value="F:ATP binding"/>
    <property type="evidence" value="ECO:0007669"/>
    <property type="project" value="UniProtKB-KW"/>
</dbReference>
<dbReference type="GO" id="GO:0016743">
    <property type="term" value="F:carboxyl- or carbamoyltransferase activity"/>
    <property type="evidence" value="ECO:0007669"/>
    <property type="project" value="UniProtKB-UniRule"/>
</dbReference>
<dbReference type="GO" id="GO:0008270">
    <property type="term" value="F:zinc ion binding"/>
    <property type="evidence" value="ECO:0007669"/>
    <property type="project" value="UniProtKB-UniRule"/>
</dbReference>
<dbReference type="GO" id="GO:0006633">
    <property type="term" value="P:fatty acid biosynthetic process"/>
    <property type="evidence" value="ECO:0007669"/>
    <property type="project" value="UniProtKB-KW"/>
</dbReference>
<dbReference type="GO" id="GO:2001295">
    <property type="term" value="P:malonyl-CoA biosynthetic process"/>
    <property type="evidence" value="ECO:0007669"/>
    <property type="project" value="UniProtKB-UniRule"/>
</dbReference>
<dbReference type="Gene3D" id="3.90.226.10">
    <property type="entry name" value="2-enoyl-CoA Hydratase, Chain A, domain 1"/>
    <property type="match status" value="1"/>
</dbReference>
<dbReference type="HAMAP" id="MF_01395">
    <property type="entry name" value="AcetylCoA_CT_beta"/>
    <property type="match status" value="1"/>
</dbReference>
<dbReference type="InterPro" id="IPR034733">
    <property type="entry name" value="AcCoA_carboxyl_beta"/>
</dbReference>
<dbReference type="InterPro" id="IPR000438">
    <property type="entry name" value="Acetyl_CoA_COase_Trfase_b_su"/>
</dbReference>
<dbReference type="InterPro" id="IPR029045">
    <property type="entry name" value="ClpP/crotonase-like_dom_sf"/>
</dbReference>
<dbReference type="InterPro" id="IPR011762">
    <property type="entry name" value="COA_CT_N"/>
</dbReference>
<dbReference type="InterPro" id="IPR041010">
    <property type="entry name" value="Znf-ACC"/>
</dbReference>
<dbReference type="NCBIfam" id="TIGR00515">
    <property type="entry name" value="accD"/>
    <property type="match status" value="1"/>
</dbReference>
<dbReference type="PANTHER" id="PTHR42995">
    <property type="entry name" value="ACETYL-COENZYME A CARBOXYLASE CARBOXYL TRANSFERASE SUBUNIT BETA, CHLOROPLASTIC"/>
    <property type="match status" value="1"/>
</dbReference>
<dbReference type="PANTHER" id="PTHR42995:SF5">
    <property type="entry name" value="ACETYL-COENZYME A CARBOXYLASE CARBOXYL TRANSFERASE SUBUNIT BETA, CHLOROPLASTIC"/>
    <property type="match status" value="1"/>
</dbReference>
<dbReference type="Pfam" id="PF01039">
    <property type="entry name" value="Carboxyl_trans"/>
    <property type="match status" value="1"/>
</dbReference>
<dbReference type="Pfam" id="PF17848">
    <property type="entry name" value="Zn_ribbon_ACC"/>
    <property type="match status" value="1"/>
</dbReference>
<dbReference type="PRINTS" id="PR01070">
    <property type="entry name" value="ACCCTRFRASEB"/>
</dbReference>
<dbReference type="SUPFAM" id="SSF52096">
    <property type="entry name" value="ClpP/crotonase"/>
    <property type="match status" value="1"/>
</dbReference>
<dbReference type="PROSITE" id="PS50980">
    <property type="entry name" value="COA_CT_NTER"/>
    <property type="match status" value="1"/>
</dbReference>
<keyword id="KW-0067">ATP-binding</keyword>
<keyword id="KW-0963">Cytoplasm</keyword>
<keyword id="KW-0275">Fatty acid biosynthesis</keyword>
<keyword id="KW-0276">Fatty acid metabolism</keyword>
<keyword id="KW-0444">Lipid biosynthesis</keyword>
<keyword id="KW-0443">Lipid metabolism</keyword>
<keyword id="KW-0479">Metal-binding</keyword>
<keyword id="KW-0547">Nucleotide-binding</keyword>
<keyword id="KW-0808">Transferase</keyword>
<keyword id="KW-0862">Zinc</keyword>
<keyword id="KW-0863">Zinc-finger</keyword>
<name>ACCD_CHLAD</name>
<sequence>MKEFFRLSRKGFTGRDDVDSAQIPDDLWVKCSACRELIYKKQLNDNLKVCPKCGHHMRMSAHEWIGLLDVGSFREMDSNLLPTDPLGFVAADESYATKLAKTQQRTGMTDAVISGVGAISGIRLCIAVADFSFMGASMGSVYGEKMARAAERAAELGIPLLTINTSGGARQQEGVIGLMQMAKITMALTRLAEAGQPHIALLVDPCYGGVTASYPSVADIIIAEPGANIGFAGKRLIEQIMRQKLPAGFQTAEFMLEHGMIDMVVPRSEMRETLARILKHYQQRQAPAAKADLAARRATLPQPIM</sequence>
<protein>
    <recommendedName>
        <fullName evidence="1">Acetyl-coenzyme A carboxylase carboxyl transferase subunit beta</fullName>
        <shortName evidence="1">ACCase subunit beta</shortName>
        <shortName evidence="1">Acetyl-CoA carboxylase carboxyltransferase subunit beta</shortName>
        <ecNumber evidence="1">2.1.3.15</ecNumber>
    </recommendedName>
</protein>
<evidence type="ECO:0000255" key="1">
    <source>
        <dbReference type="HAMAP-Rule" id="MF_01395"/>
    </source>
</evidence>
<evidence type="ECO:0000255" key="2">
    <source>
        <dbReference type="PROSITE-ProRule" id="PRU01136"/>
    </source>
</evidence>
<comment type="function">
    <text evidence="1">Component of the acetyl coenzyme A carboxylase (ACC) complex. Biotin carboxylase (BC) catalyzes the carboxylation of biotin on its carrier protein (BCCP) and then the CO(2) group is transferred by the transcarboxylase to acetyl-CoA to form malonyl-CoA.</text>
</comment>
<comment type="catalytic activity">
    <reaction evidence="1">
        <text>N(6)-carboxybiotinyl-L-lysyl-[protein] + acetyl-CoA = N(6)-biotinyl-L-lysyl-[protein] + malonyl-CoA</text>
        <dbReference type="Rhea" id="RHEA:54728"/>
        <dbReference type="Rhea" id="RHEA-COMP:10505"/>
        <dbReference type="Rhea" id="RHEA-COMP:10506"/>
        <dbReference type="ChEBI" id="CHEBI:57288"/>
        <dbReference type="ChEBI" id="CHEBI:57384"/>
        <dbReference type="ChEBI" id="CHEBI:83144"/>
        <dbReference type="ChEBI" id="CHEBI:83145"/>
        <dbReference type="EC" id="2.1.3.15"/>
    </reaction>
</comment>
<comment type="cofactor">
    <cofactor evidence="1">
        <name>Zn(2+)</name>
        <dbReference type="ChEBI" id="CHEBI:29105"/>
    </cofactor>
    <text evidence="1">Binds 1 zinc ion per subunit.</text>
</comment>
<comment type="pathway">
    <text evidence="1">Lipid metabolism; malonyl-CoA biosynthesis; malonyl-CoA from acetyl-CoA: step 1/1.</text>
</comment>
<comment type="subunit">
    <text evidence="1">Acetyl-CoA carboxylase is a heterohexamer composed of biotin carboxyl carrier protein (AccB), biotin carboxylase (AccC) and two subunits each of ACCase subunit alpha (AccA) and ACCase subunit beta (AccD).</text>
</comment>
<comment type="subcellular location">
    <subcellularLocation>
        <location evidence="1">Cytoplasm</location>
    </subcellularLocation>
</comment>
<comment type="similarity">
    <text evidence="1">Belongs to the AccD/PCCB family.</text>
</comment>
<proteinExistence type="inferred from homology"/>
<accession>B8G381</accession>
<organism>
    <name type="scientific">Chloroflexus aggregans (strain MD-66 / DSM 9485)</name>
    <dbReference type="NCBI Taxonomy" id="326427"/>
    <lineage>
        <taxon>Bacteria</taxon>
        <taxon>Bacillati</taxon>
        <taxon>Chloroflexota</taxon>
        <taxon>Chloroflexia</taxon>
        <taxon>Chloroflexales</taxon>
        <taxon>Chloroflexineae</taxon>
        <taxon>Chloroflexaceae</taxon>
        <taxon>Chloroflexus</taxon>
    </lineage>
</organism>
<feature type="chain" id="PRO_0000389718" description="Acetyl-coenzyme A carboxylase carboxyl transferase subunit beta">
    <location>
        <begin position="1"/>
        <end position="305"/>
    </location>
</feature>
<feature type="domain" description="CoA carboxyltransferase N-terminal" evidence="2">
    <location>
        <begin position="27"/>
        <end position="296"/>
    </location>
</feature>
<feature type="zinc finger region" description="C4-type" evidence="1">
    <location>
        <begin position="31"/>
        <end position="53"/>
    </location>
</feature>
<feature type="binding site" evidence="1">
    <location>
        <position position="31"/>
    </location>
    <ligand>
        <name>Zn(2+)</name>
        <dbReference type="ChEBI" id="CHEBI:29105"/>
    </ligand>
</feature>
<feature type="binding site" evidence="1">
    <location>
        <position position="34"/>
    </location>
    <ligand>
        <name>Zn(2+)</name>
        <dbReference type="ChEBI" id="CHEBI:29105"/>
    </ligand>
</feature>
<feature type="binding site" evidence="1">
    <location>
        <position position="50"/>
    </location>
    <ligand>
        <name>Zn(2+)</name>
        <dbReference type="ChEBI" id="CHEBI:29105"/>
    </ligand>
</feature>
<feature type="binding site" evidence="1">
    <location>
        <position position="53"/>
    </location>
    <ligand>
        <name>Zn(2+)</name>
        <dbReference type="ChEBI" id="CHEBI:29105"/>
    </ligand>
</feature>